<sequence>MSKTLNIIWQYLRAFVLIYACLYAGIFIASLLPVTIPGSIIGMLILFVLLALQILPAKWVNPGCYVLIRYMALLFVPIGVGVMQYFDLLRAQFGPVVVSCAVSTLVVFLVVSWSSQLVHGERKVVGQKGSEE</sequence>
<feature type="chain" id="PRO_1000137357" description="UPF0299 membrane protein YohJ">
    <location>
        <begin position="1"/>
        <end position="132"/>
    </location>
</feature>
<feature type="transmembrane region" description="Helical" evidence="1">
    <location>
        <begin position="7"/>
        <end position="27"/>
    </location>
</feature>
<feature type="transmembrane region" description="Helical" evidence="1">
    <location>
        <begin position="31"/>
        <end position="51"/>
    </location>
</feature>
<feature type="transmembrane region" description="Helical" evidence="1">
    <location>
        <begin position="63"/>
        <end position="83"/>
    </location>
</feature>
<feature type="transmembrane region" description="Helical" evidence="1">
    <location>
        <begin position="93"/>
        <end position="113"/>
    </location>
</feature>
<evidence type="ECO:0000255" key="1">
    <source>
        <dbReference type="HAMAP-Rule" id="MF_01144"/>
    </source>
</evidence>
<protein>
    <recommendedName>
        <fullName evidence="1">UPF0299 membrane protein YohJ</fullName>
    </recommendedName>
</protein>
<dbReference type="EMBL" id="CU928164">
    <property type="protein sequence ID" value="CAR18406.1"/>
    <property type="molecule type" value="Genomic_DNA"/>
</dbReference>
<dbReference type="RefSeq" id="WP_001295452.1">
    <property type="nucleotide sequence ID" value="NC_011750.1"/>
</dbReference>
<dbReference type="RefSeq" id="YP_002408242.1">
    <property type="nucleotide sequence ID" value="NC_011750.1"/>
</dbReference>
<dbReference type="SMR" id="B7NMA6"/>
<dbReference type="STRING" id="585057.ECIAI39_2280"/>
<dbReference type="KEGG" id="ect:ECIAI39_2280"/>
<dbReference type="PATRIC" id="fig|585057.6.peg.2373"/>
<dbReference type="HOGENOM" id="CLU_113736_1_1_6"/>
<dbReference type="Proteomes" id="UP000000749">
    <property type="component" value="Chromosome"/>
</dbReference>
<dbReference type="GO" id="GO:0005886">
    <property type="term" value="C:plasma membrane"/>
    <property type="evidence" value="ECO:0007669"/>
    <property type="project" value="UniProtKB-SubCell"/>
</dbReference>
<dbReference type="HAMAP" id="MF_01144">
    <property type="entry name" value="UPF0299"/>
    <property type="match status" value="1"/>
</dbReference>
<dbReference type="InterPro" id="IPR005538">
    <property type="entry name" value="LrgA/CidA"/>
</dbReference>
<dbReference type="InterPro" id="IPR022957">
    <property type="entry name" value="Uncharacterised_UPF0299"/>
</dbReference>
<dbReference type="NCBIfam" id="NF002494">
    <property type="entry name" value="PRK01821.1"/>
    <property type="match status" value="1"/>
</dbReference>
<dbReference type="PANTHER" id="PTHR33931">
    <property type="entry name" value="HOLIN-LIKE PROTEIN CIDA-RELATED"/>
    <property type="match status" value="1"/>
</dbReference>
<dbReference type="PANTHER" id="PTHR33931:SF5">
    <property type="entry name" value="UPF0299 MEMBRANE PROTEIN YOHJ"/>
    <property type="match status" value="1"/>
</dbReference>
<dbReference type="Pfam" id="PF03788">
    <property type="entry name" value="LrgA"/>
    <property type="match status" value="1"/>
</dbReference>
<name>YOHJ_ECO7I</name>
<keyword id="KW-0997">Cell inner membrane</keyword>
<keyword id="KW-1003">Cell membrane</keyword>
<keyword id="KW-0472">Membrane</keyword>
<keyword id="KW-0812">Transmembrane</keyword>
<keyword id="KW-1133">Transmembrane helix</keyword>
<accession>B7NMA6</accession>
<reference key="1">
    <citation type="journal article" date="2009" name="PLoS Genet.">
        <title>Organised genome dynamics in the Escherichia coli species results in highly diverse adaptive paths.</title>
        <authorList>
            <person name="Touchon M."/>
            <person name="Hoede C."/>
            <person name="Tenaillon O."/>
            <person name="Barbe V."/>
            <person name="Baeriswyl S."/>
            <person name="Bidet P."/>
            <person name="Bingen E."/>
            <person name="Bonacorsi S."/>
            <person name="Bouchier C."/>
            <person name="Bouvet O."/>
            <person name="Calteau A."/>
            <person name="Chiapello H."/>
            <person name="Clermont O."/>
            <person name="Cruveiller S."/>
            <person name="Danchin A."/>
            <person name="Diard M."/>
            <person name="Dossat C."/>
            <person name="Karoui M.E."/>
            <person name="Frapy E."/>
            <person name="Garry L."/>
            <person name="Ghigo J.M."/>
            <person name="Gilles A.M."/>
            <person name="Johnson J."/>
            <person name="Le Bouguenec C."/>
            <person name="Lescat M."/>
            <person name="Mangenot S."/>
            <person name="Martinez-Jehanne V."/>
            <person name="Matic I."/>
            <person name="Nassif X."/>
            <person name="Oztas S."/>
            <person name="Petit M.A."/>
            <person name="Pichon C."/>
            <person name="Rouy Z."/>
            <person name="Ruf C.S."/>
            <person name="Schneider D."/>
            <person name="Tourret J."/>
            <person name="Vacherie B."/>
            <person name="Vallenet D."/>
            <person name="Medigue C."/>
            <person name="Rocha E.P.C."/>
            <person name="Denamur E."/>
        </authorList>
    </citation>
    <scope>NUCLEOTIDE SEQUENCE [LARGE SCALE GENOMIC DNA]</scope>
    <source>
        <strain>IAI39 / ExPEC</strain>
    </source>
</reference>
<organism>
    <name type="scientific">Escherichia coli O7:K1 (strain IAI39 / ExPEC)</name>
    <dbReference type="NCBI Taxonomy" id="585057"/>
    <lineage>
        <taxon>Bacteria</taxon>
        <taxon>Pseudomonadati</taxon>
        <taxon>Pseudomonadota</taxon>
        <taxon>Gammaproteobacteria</taxon>
        <taxon>Enterobacterales</taxon>
        <taxon>Enterobacteriaceae</taxon>
        <taxon>Escherichia</taxon>
    </lineage>
</organism>
<gene>
    <name evidence="1" type="primary">yohJ</name>
    <name type="ordered locus">ECIAI39_2280</name>
</gene>
<comment type="subcellular location">
    <subcellularLocation>
        <location evidence="1">Cell inner membrane</location>
        <topology evidence="1">Multi-pass membrane protein</topology>
    </subcellularLocation>
</comment>
<comment type="similarity">
    <text evidence="1">Belongs to the UPF0299 family.</text>
</comment>
<proteinExistence type="inferred from homology"/>